<keyword id="KW-0963">Cytoplasm</keyword>
<keyword id="KW-0378">Hydrolase</keyword>
<keyword id="KW-0694">RNA-binding</keyword>
<keyword id="KW-0820">tRNA-binding</keyword>
<protein>
    <recommendedName>
        <fullName evidence="1">Peptidyl-tRNA hydrolase</fullName>
        <shortName evidence="1">Pth</shortName>
        <ecNumber evidence="1">3.1.1.29</ecNumber>
    </recommendedName>
</protein>
<accession>Q5WTE7</accession>
<proteinExistence type="inferred from homology"/>
<gene>
    <name evidence="1" type="primary">pth</name>
    <name type="ordered locus">lpl2578</name>
</gene>
<evidence type="ECO:0000255" key="1">
    <source>
        <dbReference type="HAMAP-Rule" id="MF_00083"/>
    </source>
</evidence>
<dbReference type="EC" id="3.1.1.29" evidence="1"/>
<dbReference type="EMBL" id="CR628337">
    <property type="protein sequence ID" value="CAH16819.1"/>
    <property type="molecule type" value="Genomic_DNA"/>
</dbReference>
<dbReference type="RefSeq" id="WP_011216523.1">
    <property type="nucleotide sequence ID" value="NC_006369.1"/>
</dbReference>
<dbReference type="SMR" id="Q5WTE7"/>
<dbReference type="KEGG" id="lpf:lpl2578"/>
<dbReference type="LegioList" id="lpl2578"/>
<dbReference type="HOGENOM" id="CLU_062456_3_1_6"/>
<dbReference type="Proteomes" id="UP000002517">
    <property type="component" value="Chromosome"/>
</dbReference>
<dbReference type="GO" id="GO:0005737">
    <property type="term" value="C:cytoplasm"/>
    <property type="evidence" value="ECO:0007669"/>
    <property type="project" value="UniProtKB-SubCell"/>
</dbReference>
<dbReference type="GO" id="GO:0004045">
    <property type="term" value="F:peptidyl-tRNA hydrolase activity"/>
    <property type="evidence" value="ECO:0007669"/>
    <property type="project" value="UniProtKB-UniRule"/>
</dbReference>
<dbReference type="GO" id="GO:0000049">
    <property type="term" value="F:tRNA binding"/>
    <property type="evidence" value="ECO:0007669"/>
    <property type="project" value="UniProtKB-UniRule"/>
</dbReference>
<dbReference type="GO" id="GO:0006515">
    <property type="term" value="P:protein quality control for misfolded or incompletely synthesized proteins"/>
    <property type="evidence" value="ECO:0007669"/>
    <property type="project" value="UniProtKB-UniRule"/>
</dbReference>
<dbReference type="GO" id="GO:0072344">
    <property type="term" value="P:rescue of stalled ribosome"/>
    <property type="evidence" value="ECO:0007669"/>
    <property type="project" value="UniProtKB-UniRule"/>
</dbReference>
<dbReference type="CDD" id="cd00462">
    <property type="entry name" value="PTH"/>
    <property type="match status" value="1"/>
</dbReference>
<dbReference type="FunFam" id="3.40.50.1470:FF:000001">
    <property type="entry name" value="Peptidyl-tRNA hydrolase"/>
    <property type="match status" value="1"/>
</dbReference>
<dbReference type="Gene3D" id="3.40.50.1470">
    <property type="entry name" value="Peptidyl-tRNA hydrolase"/>
    <property type="match status" value="1"/>
</dbReference>
<dbReference type="HAMAP" id="MF_00083">
    <property type="entry name" value="Pept_tRNA_hydro_bact"/>
    <property type="match status" value="1"/>
</dbReference>
<dbReference type="InterPro" id="IPR001328">
    <property type="entry name" value="Pept_tRNA_hydro"/>
</dbReference>
<dbReference type="InterPro" id="IPR018171">
    <property type="entry name" value="Pept_tRNA_hydro_CS"/>
</dbReference>
<dbReference type="InterPro" id="IPR036416">
    <property type="entry name" value="Pept_tRNA_hydro_sf"/>
</dbReference>
<dbReference type="NCBIfam" id="TIGR00447">
    <property type="entry name" value="pth"/>
    <property type="match status" value="1"/>
</dbReference>
<dbReference type="PANTHER" id="PTHR17224">
    <property type="entry name" value="PEPTIDYL-TRNA HYDROLASE"/>
    <property type="match status" value="1"/>
</dbReference>
<dbReference type="PANTHER" id="PTHR17224:SF1">
    <property type="entry name" value="PEPTIDYL-TRNA HYDROLASE"/>
    <property type="match status" value="1"/>
</dbReference>
<dbReference type="Pfam" id="PF01195">
    <property type="entry name" value="Pept_tRNA_hydro"/>
    <property type="match status" value="1"/>
</dbReference>
<dbReference type="SUPFAM" id="SSF53178">
    <property type="entry name" value="Peptidyl-tRNA hydrolase-like"/>
    <property type="match status" value="1"/>
</dbReference>
<dbReference type="PROSITE" id="PS01196">
    <property type="entry name" value="PEPT_TRNA_HYDROL_2"/>
    <property type="match status" value="1"/>
</dbReference>
<organism>
    <name type="scientific">Legionella pneumophila (strain Lens)</name>
    <dbReference type="NCBI Taxonomy" id="297245"/>
    <lineage>
        <taxon>Bacteria</taxon>
        <taxon>Pseudomonadati</taxon>
        <taxon>Pseudomonadota</taxon>
        <taxon>Gammaproteobacteria</taxon>
        <taxon>Legionellales</taxon>
        <taxon>Legionellaceae</taxon>
        <taxon>Legionella</taxon>
    </lineage>
</organism>
<reference key="1">
    <citation type="journal article" date="2004" name="Nat. Genet.">
        <title>Evidence in the Legionella pneumophila genome for exploitation of host cell functions and high genome plasticity.</title>
        <authorList>
            <person name="Cazalet C."/>
            <person name="Rusniok C."/>
            <person name="Brueggemann H."/>
            <person name="Zidane N."/>
            <person name="Magnier A."/>
            <person name="Ma L."/>
            <person name="Tichit M."/>
            <person name="Jarraud S."/>
            <person name="Bouchier C."/>
            <person name="Vandenesch F."/>
            <person name="Kunst F."/>
            <person name="Etienne J."/>
            <person name="Glaser P."/>
            <person name="Buchrieser C."/>
        </authorList>
    </citation>
    <scope>NUCLEOTIDE SEQUENCE [LARGE SCALE GENOMIC DNA]</scope>
    <source>
        <strain>Lens</strain>
    </source>
</reference>
<sequence>MAIKLIVGLRNPGSAYEQTRHNAGAWLVTALAQRHNSHFKIDKKMQAELTEIDINNHPCRLLLPLTFMNHSGQTTRIISQFYKIEPGEILIVHDELDLPVGRIKLKTGGGHGGHNGLRDITAQLGTGEFHRLRIGIGHPGHKDLVHQYVLSRPSMHDRQQIYDAIDRGIAIIPIVLSGDIARAMNQVNA</sequence>
<feature type="chain" id="PRO_0000187759" description="Peptidyl-tRNA hydrolase">
    <location>
        <begin position="1"/>
        <end position="189"/>
    </location>
</feature>
<feature type="active site" description="Proton acceptor" evidence="1">
    <location>
        <position position="21"/>
    </location>
</feature>
<feature type="binding site" evidence="1">
    <location>
        <position position="16"/>
    </location>
    <ligand>
        <name>tRNA</name>
        <dbReference type="ChEBI" id="CHEBI:17843"/>
    </ligand>
</feature>
<feature type="binding site" evidence="1">
    <location>
        <position position="67"/>
    </location>
    <ligand>
        <name>tRNA</name>
        <dbReference type="ChEBI" id="CHEBI:17843"/>
    </ligand>
</feature>
<feature type="binding site" evidence="1">
    <location>
        <position position="69"/>
    </location>
    <ligand>
        <name>tRNA</name>
        <dbReference type="ChEBI" id="CHEBI:17843"/>
    </ligand>
</feature>
<feature type="binding site" evidence="1">
    <location>
        <position position="115"/>
    </location>
    <ligand>
        <name>tRNA</name>
        <dbReference type="ChEBI" id="CHEBI:17843"/>
    </ligand>
</feature>
<feature type="site" description="Discriminates between blocked and unblocked aminoacyl-tRNA" evidence="1">
    <location>
        <position position="11"/>
    </location>
</feature>
<feature type="site" description="Stabilizes the basic form of H active site to accept a proton" evidence="1">
    <location>
        <position position="94"/>
    </location>
</feature>
<name>PTH_LEGPL</name>
<comment type="function">
    <text evidence="1">Hydrolyzes ribosome-free peptidyl-tRNAs (with 1 or more amino acids incorporated), which drop off the ribosome during protein synthesis, or as a result of ribosome stalling.</text>
</comment>
<comment type="function">
    <text evidence="1">Catalyzes the release of premature peptidyl moieties from peptidyl-tRNA molecules trapped in stalled 50S ribosomal subunits, and thus maintains levels of free tRNAs and 50S ribosomes.</text>
</comment>
<comment type="catalytic activity">
    <reaction evidence="1">
        <text>an N-acyl-L-alpha-aminoacyl-tRNA + H2O = an N-acyl-L-amino acid + a tRNA + H(+)</text>
        <dbReference type="Rhea" id="RHEA:54448"/>
        <dbReference type="Rhea" id="RHEA-COMP:10123"/>
        <dbReference type="Rhea" id="RHEA-COMP:13883"/>
        <dbReference type="ChEBI" id="CHEBI:15377"/>
        <dbReference type="ChEBI" id="CHEBI:15378"/>
        <dbReference type="ChEBI" id="CHEBI:59874"/>
        <dbReference type="ChEBI" id="CHEBI:78442"/>
        <dbReference type="ChEBI" id="CHEBI:138191"/>
        <dbReference type="EC" id="3.1.1.29"/>
    </reaction>
</comment>
<comment type="subunit">
    <text evidence="1">Monomer.</text>
</comment>
<comment type="subcellular location">
    <subcellularLocation>
        <location evidence="1">Cytoplasm</location>
    </subcellularLocation>
</comment>
<comment type="similarity">
    <text evidence="1">Belongs to the PTH family.</text>
</comment>